<protein>
    <recommendedName>
        <fullName evidence="1">Sulfur carrier protein FdhD</fullName>
    </recommendedName>
</protein>
<accession>A9R4E9</accession>
<keyword id="KW-0963">Cytoplasm</keyword>
<keyword id="KW-0501">Molybdenum cofactor biosynthesis</keyword>
<feature type="chain" id="PRO_1000098796" description="Sulfur carrier protein FdhD">
    <location>
        <begin position="1"/>
        <end position="274"/>
    </location>
</feature>
<feature type="active site" description="Cysteine persulfide intermediate" evidence="1">
    <location>
        <position position="121"/>
    </location>
</feature>
<feature type="binding site" evidence="1">
    <location>
        <begin position="258"/>
        <end position="263"/>
    </location>
    <ligand>
        <name>Mo-bis(molybdopterin guanine dinucleotide)</name>
        <dbReference type="ChEBI" id="CHEBI:60539"/>
    </ligand>
</feature>
<comment type="function">
    <text evidence="1">Required for formate dehydrogenase (FDH) activity. Acts as a sulfur carrier protein that transfers sulfur from IscS to the molybdenum cofactor prior to its insertion into FDH.</text>
</comment>
<comment type="subcellular location">
    <subcellularLocation>
        <location evidence="1">Cytoplasm</location>
    </subcellularLocation>
</comment>
<comment type="similarity">
    <text evidence="1">Belongs to the FdhD family.</text>
</comment>
<proteinExistence type="inferred from homology"/>
<evidence type="ECO:0000255" key="1">
    <source>
        <dbReference type="HAMAP-Rule" id="MF_00187"/>
    </source>
</evidence>
<dbReference type="EMBL" id="CP000901">
    <property type="protein sequence ID" value="ABX87982.1"/>
    <property type="molecule type" value="Genomic_DNA"/>
</dbReference>
<dbReference type="RefSeq" id="WP_002209612.1">
    <property type="nucleotide sequence ID" value="NZ_CP009935.1"/>
</dbReference>
<dbReference type="SMR" id="A9R4E9"/>
<dbReference type="GeneID" id="57974655"/>
<dbReference type="KEGG" id="ypg:YpAngola_A3771"/>
<dbReference type="PATRIC" id="fig|349746.12.peg.482"/>
<dbReference type="GO" id="GO:0005737">
    <property type="term" value="C:cytoplasm"/>
    <property type="evidence" value="ECO:0007669"/>
    <property type="project" value="UniProtKB-SubCell"/>
</dbReference>
<dbReference type="GO" id="GO:0097163">
    <property type="term" value="F:sulfur carrier activity"/>
    <property type="evidence" value="ECO:0007669"/>
    <property type="project" value="UniProtKB-UniRule"/>
</dbReference>
<dbReference type="GO" id="GO:0016783">
    <property type="term" value="F:sulfurtransferase activity"/>
    <property type="evidence" value="ECO:0007669"/>
    <property type="project" value="InterPro"/>
</dbReference>
<dbReference type="GO" id="GO:0006777">
    <property type="term" value="P:Mo-molybdopterin cofactor biosynthetic process"/>
    <property type="evidence" value="ECO:0007669"/>
    <property type="project" value="UniProtKB-UniRule"/>
</dbReference>
<dbReference type="Gene3D" id="3.10.20.10">
    <property type="match status" value="1"/>
</dbReference>
<dbReference type="Gene3D" id="3.40.140.10">
    <property type="entry name" value="Cytidine Deaminase, domain 2"/>
    <property type="match status" value="1"/>
</dbReference>
<dbReference type="HAMAP" id="MF_00187">
    <property type="entry name" value="FdhD"/>
    <property type="match status" value="1"/>
</dbReference>
<dbReference type="InterPro" id="IPR016193">
    <property type="entry name" value="Cytidine_deaminase-like"/>
</dbReference>
<dbReference type="InterPro" id="IPR003786">
    <property type="entry name" value="FdhD"/>
</dbReference>
<dbReference type="NCBIfam" id="TIGR00129">
    <property type="entry name" value="fdhD_narQ"/>
    <property type="match status" value="1"/>
</dbReference>
<dbReference type="PANTHER" id="PTHR30592">
    <property type="entry name" value="FORMATE DEHYDROGENASE"/>
    <property type="match status" value="1"/>
</dbReference>
<dbReference type="PANTHER" id="PTHR30592:SF1">
    <property type="entry name" value="SULFUR CARRIER PROTEIN FDHD"/>
    <property type="match status" value="1"/>
</dbReference>
<dbReference type="Pfam" id="PF02634">
    <property type="entry name" value="FdhD-NarQ"/>
    <property type="match status" value="1"/>
</dbReference>
<dbReference type="PIRSF" id="PIRSF015626">
    <property type="entry name" value="FdhD"/>
    <property type="match status" value="1"/>
</dbReference>
<dbReference type="SUPFAM" id="SSF53927">
    <property type="entry name" value="Cytidine deaminase-like"/>
    <property type="match status" value="1"/>
</dbReference>
<sequence>MSQIKPSRLSSSAEIRGARQLDVLQRHKLAEPQQDWLAEEVPVALVYNGISHVVMMATPKDLAAFALGFSLSEGIISSPQEIYSIEMTPGCNGIEVNIELSSRRFAGLKERRRAMAGRTGCGVCGIEQLDDIFRPITPLPFTQAFNLEHLDTALAQLKQVQPVGQLTGCTHAAAWINPEGELLGGCEDVGRHVALDKLLGIRAKQPWQQGAVLVSSRASYEMVQKTAMCGAEILFAVSAATTLAVEVAERCNLTLVGFSKPGRATVYTHPQRIK</sequence>
<reference key="1">
    <citation type="journal article" date="2010" name="J. Bacteriol.">
        <title>Genome sequence of the deep-rooted Yersinia pestis strain Angola reveals new insights into the evolution and pangenome of the plague bacterium.</title>
        <authorList>
            <person name="Eppinger M."/>
            <person name="Worsham P.L."/>
            <person name="Nikolich M.P."/>
            <person name="Riley D.R."/>
            <person name="Sebastian Y."/>
            <person name="Mou S."/>
            <person name="Achtman M."/>
            <person name="Lindler L.E."/>
            <person name="Ravel J."/>
        </authorList>
    </citation>
    <scope>NUCLEOTIDE SEQUENCE [LARGE SCALE GENOMIC DNA]</scope>
    <source>
        <strain>Angola</strain>
    </source>
</reference>
<gene>
    <name evidence="1" type="primary">fdhD</name>
    <name type="ordered locus">YpAngola_A3771</name>
</gene>
<name>FDHD_YERPG</name>
<organism>
    <name type="scientific">Yersinia pestis bv. Antiqua (strain Angola)</name>
    <dbReference type="NCBI Taxonomy" id="349746"/>
    <lineage>
        <taxon>Bacteria</taxon>
        <taxon>Pseudomonadati</taxon>
        <taxon>Pseudomonadota</taxon>
        <taxon>Gammaproteobacteria</taxon>
        <taxon>Enterobacterales</taxon>
        <taxon>Yersiniaceae</taxon>
        <taxon>Yersinia</taxon>
    </lineage>
</organism>